<reference key="1">
    <citation type="journal article" date="1994" name="Nature">
        <title>2.2 Mb of contiguous nucleotide sequence from chromosome III of C. elegans.</title>
        <authorList>
            <person name="Wilson R."/>
            <person name="Ainscough R."/>
            <person name="Anderson K."/>
            <person name="Baynes C."/>
            <person name="Berks M."/>
            <person name="Bonfield J."/>
            <person name="Burton J."/>
            <person name="Connell M."/>
            <person name="Copsey T."/>
            <person name="Cooper J."/>
            <person name="Coulson A."/>
            <person name="Craxton M."/>
            <person name="Dear S."/>
            <person name="Du Z."/>
            <person name="Durbin R."/>
            <person name="Favello A."/>
            <person name="Fraser A."/>
            <person name="Fulton L."/>
            <person name="Gardner A."/>
            <person name="Green P."/>
            <person name="Hawkins T."/>
            <person name="Hillier L."/>
            <person name="Jier M."/>
            <person name="Johnston L."/>
            <person name="Jones M."/>
            <person name="Kershaw J."/>
            <person name="Kirsten J."/>
            <person name="Laisster N."/>
            <person name="Latreille P."/>
            <person name="Lightning J."/>
            <person name="Lloyd C."/>
            <person name="Mortimore B."/>
            <person name="O'Callaghan M."/>
            <person name="Parsons J."/>
            <person name="Percy C."/>
            <person name="Rifken L."/>
            <person name="Roopra A."/>
            <person name="Saunders D."/>
            <person name="Shownkeen R."/>
            <person name="Sims M."/>
            <person name="Smaldon N."/>
            <person name="Smith A."/>
            <person name="Smith M."/>
            <person name="Sonnhammer E."/>
            <person name="Staden R."/>
            <person name="Sulston J."/>
            <person name="Thierry-Mieg J."/>
            <person name="Thomas K."/>
            <person name="Vaudin M."/>
            <person name="Vaughan K."/>
            <person name="Waterston R."/>
            <person name="Watson A."/>
            <person name="Weinstock L."/>
            <person name="Wilkinson-Sproat J."/>
            <person name="Wohldman P."/>
        </authorList>
    </citation>
    <scope>NUCLEOTIDE SEQUENCE [LARGE SCALE GENOMIC DNA]</scope>
    <scope>ALTERNATIVE SPLICING</scope>
    <source>
        <strain>Bristol N2</strain>
    </source>
</reference>
<reference key="2">
    <citation type="journal article" date="1998" name="Science">
        <title>Genome sequence of the nematode C. elegans: a platform for investigating biology.</title>
        <authorList>
            <consortium name="The C. elegans sequencing consortium"/>
        </authorList>
    </citation>
    <scope>NUCLEOTIDE SEQUENCE [LARGE SCALE GENOMIC DNA]</scope>
    <scope>ALTERNATIVE SPLICING</scope>
    <source>
        <strain>Bristol N2</strain>
    </source>
</reference>
<reference key="3">
    <citation type="journal article" date="2010" name="Dev. Biol.">
        <title>UNC-83 coordinates kinesin-1 and dynein activities at the nuclear envelope during nuclear migration.</title>
        <authorList>
            <person name="Fridolfsson H.N."/>
            <person name="Ly N."/>
            <person name="Meyerzon M."/>
            <person name="Starr D.A."/>
        </authorList>
    </citation>
    <scope>INTERACTION WITH UNC-83</scope>
    <source>
        <strain>Bristol N2</strain>
    </source>
</reference>
<gene>
    <name evidence="4" type="primary">prp-40</name>
    <name type="ORF">ZK1098.1</name>
</gene>
<dbReference type="EMBL" id="Z22176">
    <property type="protein sequence ID" value="CAA80142.1"/>
    <property type="molecule type" value="Genomic_DNA"/>
</dbReference>
<dbReference type="EMBL" id="Z22176">
    <property type="protein sequence ID" value="CCD31169.1"/>
    <property type="molecule type" value="Genomic_DNA"/>
</dbReference>
<dbReference type="PIR" id="F88557">
    <property type="entry name" value="F88557"/>
</dbReference>
<dbReference type="PIR" id="S40923">
    <property type="entry name" value="S40923"/>
</dbReference>
<dbReference type="RefSeq" id="NP_001255005.1">
    <molecule id="P34600-1"/>
    <property type="nucleotide sequence ID" value="NM_001268076.1"/>
</dbReference>
<dbReference type="RefSeq" id="NP_001255006.1">
    <molecule id="P34600-2"/>
    <property type="nucleotide sequence ID" value="NM_001268077.1"/>
</dbReference>
<dbReference type="SMR" id="P34600"/>
<dbReference type="BioGRID" id="41538">
    <property type="interactions" value="7"/>
</dbReference>
<dbReference type="FunCoup" id="P34600">
    <property type="interactions" value="3394"/>
</dbReference>
<dbReference type="STRING" id="6239.ZK1098.1a.1"/>
<dbReference type="iPTMnet" id="P34600"/>
<dbReference type="PaxDb" id="6239-ZK1098.1a"/>
<dbReference type="PeptideAtlas" id="P34600"/>
<dbReference type="EnsemblMetazoa" id="ZK1098.1a.1">
    <molecule id="P34600-1"/>
    <property type="protein sequence ID" value="ZK1098.1a.1"/>
    <property type="gene ID" value="WBGene00014218"/>
</dbReference>
<dbReference type="EnsemblMetazoa" id="ZK1098.1b.1">
    <molecule id="P34600-2"/>
    <property type="protein sequence ID" value="ZK1098.1b.1"/>
    <property type="gene ID" value="WBGene00014218"/>
</dbReference>
<dbReference type="KEGG" id="cel:CELE_ZK1098.1"/>
<dbReference type="UCSC" id="ZK1098.1">
    <molecule id="P34600-1"/>
    <property type="organism name" value="c. elegans"/>
</dbReference>
<dbReference type="AGR" id="WB:WBGene00014218"/>
<dbReference type="CTD" id="176343"/>
<dbReference type="WormBase" id="ZK1098.1a">
    <molecule id="P34600-1"/>
    <property type="protein sequence ID" value="CE03847"/>
    <property type="gene ID" value="WBGene00014218"/>
    <property type="gene designation" value="prp-40"/>
</dbReference>
<dbReference type="WormBase" id="ZK1098.1b">
    <molecule id="P34600-2"/>
    <property type="protein sequence ID" value="CE46142"/>
    <property type="gene ID" value="WBGene00014218"/>
    <property type="gene designation" value="prp-40"/>
</dbReference>
<dbReference type="eggNOG" id="KOG0152">
    <property type="taxonomic scope" value="Eukaryota"/>
</dbReference>
<dbReference type="GeneTree" id="ENSGT00930000150980"/>
<dbReference type="HOGENOM" id="CLU_005825_0_1_1"/>
<dbReference type="InParanoid" id="P34600"/>
<dbReference type="OMA" id="VYDMWVA"/>
<dbReference type="OrthoDB" id="187617at2759"/>
<dbReference type="PhylomeDB" id="P34600"/>
<dbReference type="PRO" id="PR:P34600"/>
<dbReference type="Proteomes" id="UP000001940">
    <property type="component" value="Chromosome III"/>
</dbReference>
<dbReference type="Bgee" id="WBGene00014218">
    <property type="expression patterns" value="Expressed in embryo and 4 other cell types or tissues"/>
</dbReference>
<dbReference type="GO" id="GO:0005634">
    <property type="term" value="C:nucleus"/>
    <property type="evidence" value="ECO:0007005"/>
    <property type="project" value="WormBase"/>
</dbReference>
<dbReference type="GO" id="GO:0005685">
    <property type="term" value="C:U1 snRNP"/>
    <property type="evidence" value="ECO:0000318"/>
    <property type="project" value="GO_Central"/>
</dbReference>
<dbReference type="GO" id="GO:0071004">
    <property type="term" value="C:U2-type prespliceosome"/>
    <property type="evidence" value="ECO:0000318"/>
    <property type="project" value="GO_Central"/>
</dbReference>
<dbReference type="GO" id="GO:0003723">
    <property type="term" value="F:RNA binding"/>
    <property type="evidence" value="ECO:0000318"/>
    <property type="project" value="GO_Central"/>
</dbReference>
<dbReference type="GO" id="GO:0045292">
    <property type="term" value="P:mRNA cis splicing, via spliceosome"/>
    <property type="evidence" value="ECO:0007669"/>
    <property type="project" value="InterPro"/>
</dbReference>
<dbReference type="GO" id="GO:0000398">
    <property type="term" value="P:mRNA splicing, via spliceosome"/>
    <property type="evidence" value="ECO:0000318"/>
    <property type="project" value="GO_Central"/>
</dbReference>
<dbReference type="CDD" id="cd00201">
    <property type="entry name" value="WW"/>
    <property type="match status" value="2"/>
</dbReference>
<dbReference type="FunFam" id="1.10.10.440:FF:000003">
    <property type="entry name" value="Pre-mRNA processing factor 40 homolog A"/>
    <property type="match status" value="1"/>
</dbReference>
<dbReference type="FunFam" id="1.10.10.440:FF:000002">
    <property type="entry name" value="pre-mRNA-processing factor 40 homolog A isoform X1"/>
    <property type="match status" value="1"/>
</dbReference>
<dbReference type="FunFam" id="2.20.70.10:FF:000102">
    <property type="entry name" value="Pre-mRNA-processing factor 40 homolog B"/>
    <property type="match status" value="1"/>
</dbReference>
<dbReference type="FunFam" id="1.10.10.440:FF:000046">
    <property type="entry name" value="WW domain-containing protein ZK1098.1"/>
    <property type="match status" value="1"/>
</dbReference>
<dbReference type="FunFam" id="1.10.10.440:FF:000069">
    <property type="entry name" value="WW domain-containing protein ZK1098.1"/>
    <property type="match status" value="1"/>
</dbReference>
<dbReference type="Gene3D" id="2.20.70.10">
    <property type="match status" value="2"/>
</dbReference>
<dbReference type="Gene3D" id="1.10.10.440">
    <property type="entry name" value="FF domain"/>
    <property type="match status" value="5"/>
</dbReference>
<dbReference type="InterPro" id="IPR002713">
    <property type="entry name" value="FF_domain"/>
</dbReference>
<dbReference type="InterPro" id="IPR036517">
    <property type="entry name" value="FF_domain_sf"/>
</dbReference>
<dbReference type="InterPro" id="IPR039726">
    <property type="entry name" value="Prp40-like"/>
</dbReference>
<dbReference type="InterPro" id="IPR001202">
    <property type="entry name" value="WW_dom"/>
</dbReference>
<dbReference type="InterPro" id="IPR036020">
    <property type="entry name" value="WW_dom_sf"/>
</dbReference>
<dbReference type="PANTHER" id="PTHR11864">
    <property type="entry name" value="PRE-MRNA-PROCESSING PROTEIN PRP40"/>
    <property type="match status" value="1"/>
</dbReference>
<dbReference type="PANTHER" id="PTHR11864:SF0">
    <property type="entry name" value="PRP40 PRE-MRNA PROCESSING FACTOR 40 HOMOLOG A (YEAST)"/>
    <property type="match status" value="1"/>
</dbReference>
<dbReference type="Pfam" id="PF01846">
    <property type="entry name" value="FF"/>
    <property type="match status" value="4"/>
</dbReference>
<dbReference type="Pfam" id="PF25432">
    <property type="entry name" value="FF_PRPF40A"/>
    <property type="match status" value="1"/>
</dbReference>
<dbReference type="Pfam" id="PF00397">
    <property type="entry name" value="WW"/>
    <property type="match status" value="2"/>
</dbReference>
<dbReference type="SMART" id="SM00441">
    <property type="entry name" value="FF"/>
    <property type="match status" value="5"/>
</dbReference>
<dbReference type="SMART" id="SM00456">
    <property type="entry name" value="WW"/>
    <property type="match status" value="2"/>
</dbReference>
<dbReference type="SUPFAM" id="SSF81698">
    <property type="entry name" value="FF domain"/>
    <property type="match status" value="5"/>
</dbReference>
<dbReference type="SUPFAM" id="SSF51045">
    <property type="entry name" value="WW domain"/>
    <property type="match status" value="2"/>
</dbReference>
<dbReference type="PROSITE" id="PS51676">
    <property type="entry name" value="FF"/>
    <property type="match status" value="6"/>
</dbReference>
<dbReference type="PROSITE" id="PS01159">
    <property type="entry name" value="WW_DOMAIN_1"/>
    <property type="match status" value="2"/>
</dbReference>
<dbReference type="PROSITE" id="PS50020">
    <property type="entry name" value="WW_DOMAIN_2"/>
    <property type="match status" value="2"/>
</dbReference>
<feature type="chain" id="PRO_0000076098" description="WW domain-containing protein ZK1098.1">
    <location>
        <begin position="1"/>
        <end position="724"/>
    </location>
</feature>
<feature type="domain" description="WW 1" evidence="1">
    <location>
        <begin position="78"/>
        <end position="111"/>
    </location>
</feature>
<feature type="domain" description="WW 2" evidence="1">
    <location>
        <begin position="123"/>
        <end position="156"/>
    </location>
</feature>
<feature type="domain" description="FF 1">
    <location>
        <begin position="224"/>
        <end position="282"/>
    </location>
</feature>
<feature type="domain" description="FF 2">
    <location>
        <begin position="295"/>
        <end position="349"/>
    </location>
</feature>
<feature type="domain" description="FF 3">
    <location>
        <begin position="353"/>
        <end position="422"/>
    </location>
</feature>
<feature type="domain" description="FF 4">
    <location>
        <begin position="442"/>
        <end position="502"/>
    </location>
</feature>
<feature type="domain" description="FF 5">
    <location>
        <begin position="507"/>
        <end position="562"/>
    </location>
</feature>
<feature type="domain" description="FF 6">
    <location>
        <begin position="578"/>
        <end position="632"/>
    </location>
</feature>
<feature type="region of interest" description="Disordered" evidence="2">
    <location>
        <begin position="626"/>
        <end position="724"/>
    </location>
</feature>
<feature type="compositionally biased region" description="Polar residues" evidence="2">
    <location>
        <begin position="630"/>
        <end position="639"/>
    </location>
</feature>
<feature type="compositionally biased region" description="Basic residues" evidence="2">
    <location>
        <begin position="645"/>
        <end position="657"/>
    </location>
</feature>
<feature type="compositionally biased region" description="Basic and acidic residues" evidence="2">
    <location>
        <begin position="681"/>
        <end position="692"/>
    </location>
</feature>
<feature type="compositionally biased region" description="Basic residues" evidence="2">
    <location>
        <begin position="693"/>
        <end position="703"/>
    </location>
</feature>
<feature type="splice variant" id="VSP_043943" description="In isoform b." evidence="3">
    <location>
        <begin position="1"/>
        <end position="311"/>
    </location>
</feature>
<keyword id="KW-0025">Alternative splicing</keyword>
<keyword id="KW-1185">Reference proteome</keyword>
<keyword id="KW-0677">Repeat</keyword>
<evidence type="ECO:0000255" key="1">
    <source>
        <dbReference type="PROSITE-ProRule" id="PRU00224"/>
    </source>
</evidence>
<evidence type="ECO:0000256" key="2">
    <source>
        <dbReference type="SAM" id="MobiDB-lite"/>
    </source>
</evidence>
<evidence type="ECO:0000305" key="3"/>
<evidence type="ECO:0000312" key="4">
    <source>
        <dbReference type="WormBase" id="ZK1098.1a"/>
    </source>
</evidence>
<name>YO61_CAEEL</name>
<sequence length="724" mass="84665">MLPNGFSFLNPNLVAAANIQQVLLNQRFGMPPVGSIAQVPLLQMPTHSVVAPHVAAPTRPSPMLVPPGMGIDESHSSPSVESDWSVHTNEKGTPYYHNRVTKQTSWIKPDVLKTPLERSTSGQPQQGQWKEFMSDDGKPYYYNTLTKKTQWVKPDGEEITKGEQKPAAKAATVDTVALAAAVQQKKAESDLDKAMKATLASMPNVPLPSEKKEEESVNDEVELKKRQSERFRELLRDKYNDGKITTNCNWDQAVKWIQNDPRFRILNKVSEKKQLFNAWKVQRGKEERDEKRLAIKKSKEDLEKFLQEHPKMKESLKYQKASDIFSKEPLWIAVNDEDRKEIFRDCIDFVARRDKEKKEEDRKRDIAAFSHVLQSMEQITYKTTWAQAQRILYENPQFAERKDLHFMDKEDALTVFEDHIKQAEKEHDEEKEQEEKRLRRQQRKVREEYRLLLESLHKRGELTSMSLWTSLFPIISTDTRFELMLFQPGSSPLDLFKFFVEDLKEQYTEDRRLIKEILTEKGCQVIATTEYREFSDWVVSHEKGGKVDHGNMKLCYNSLIEKAESKAKDEEKESLRRKRRLESEFRNLLKEHNVDKDSEWTVIKPKIEKDKAYLAMENDDERETAFNHYKNGTSGTTAGSEILEKKKKKKDKKKKNKRSDNNSESEGEIREKEKKKKKKHSKEDRMDDEERGKKSKKSRKRSPSRSESPRHSSEKRKRRESEAD</sequence>
<protein>
    <recommendedName>
        <fullName>WW domain-containing protein ZK1098.1</fullName>
    </recommendedName>
</protein>
<accession>P34600</accession>
<accession>G3MTW8</accession>
<proteinExistence type="evidence at protein level"/>
<organism>
    <name type="scientific">Caenorhabditis elegans</name>
    <dbReference type="NCBI Taxonomy" id="6239"/>
    <lineage>
        <taxon>Eukaryota</taxon>
        <taxon>Metazoa</taxon>
        <taxon>Ecdysozoa</taxon>
        <taxon>Nematoda</taxon>
        <taxon>Chromadorea</taxon>
        <taxon>Rhabditida</taxon>
        <taxon>Rhabditina</taxon>
        <taxon>Rhabditomorpha</taxon>
        <taxon>Rhabditoidea</taxon>
        <taxon>Rhabditidae</taxon>
        <taxon>Peloderinae</taxon>
        <taxon>Caenorhabditis</taxon>
    </lineage>
</organism>
<comment type="alternative products">
    <event type="alternative splicing"/>
    <isoform>
        <id>P34600-1</id>
        <name>a</name>
        <sequence type="displayed"/>
    </isoform>
    <isoform>
        <id>P34600-2</id>
        <name>b</name>
        <sequence type="described" ref="VSP_043943"/>
    </isoform>
</comment>